<evidence type="ECO:0000255" key="1"/>
<evidence type="ECO:0000255" key="2">
    <source>
        <dbReference type="HAMAP-Rule" id="MF_03057"/>
    </source>
</evidence>
<proteinExistence type="inferred from homology"/>
<protein>
    <recommendedName>
        <fullName evidence="2">Succinate dehydrogenase assembly factor 2-B, mitochondrial</fullName>
        <shortName evidence="2">SDH assembly factor 2-B</shortName>
        <shortName evidence="2">SDHAF2-B</shortName>
    </recommendedName>
</protein>
<keyword id="KW-0143">Chaperone</keyword>
<keyword id="KW-0496">Mitochondrion</keyword>
<keyword id="KW-1185">Reference proteome</keyword>
<keyword id="KW-0809">Transit peptide</keyword>
<dbReference type="EMBL" id="CH479183">
    <property type="protein sequence ID" value="EDW35478.1"/>
    <property type="molecule type" value="Genomic_DNA"/>
</dbReference>
<dbReference type="SMR" id="B4GG58"/>
<dbReference type="STRING" id="7234.B4GG58"/>
<dbReference type="EnsemblMetazoa" id="FBtr0182819">
    <property type="protein sequence ID" value="FBpp0181311"/>
    <property type="gene ID" value="FBgn0154807"/>
</dbReference>
<dbReference type="EnsemblMetazoa" id="XM_002017603.2">
    <property type="protein sequence ID" value="XP_002017639.1"/>
    <property type="gene ID" value="LOC6592253"/>
</dbReference>
<dbReference type="GeneID" id="6592253"/>
<dbReference type="KEGG" id="dpe:6592253"/>
<dbReference type="eggNOG" id="KOG3326">
    <property type="taxonomic scope" value="Eukaryota"/>
</dbReference>
<dbReference type="HOGENOM" id="CLU_103054_0_3_1"/>
<dbReference type="OMA" id="DTEIMRM"/>
<dbReference type="OrthoDB" id="284292at2759"/>
<dbReference type="PhylomeDB" id="B4GG58"/>
<dbReference type="Proteomes" id="UP000008744">
    <property type="component" value="Unassembled WGS sequence"/>
</dbReference>
<dbReference type="GO" id="GO:0005759">
    <property type="term" value="C:mitochondrial matrix"/>
    <property type="evidence" value="ECO:0007669"/>
    <property type="project" value="UniProtKB-SubCell"/>
</dbReference>
<dbReference type="GO" id="GO:0005739">
    <property type="term" value="C:mitochondrion"/>
    <property type="evidence" value="ECO:0000250"/>
    <property type="project" value="UniProtKB"/>
</dbReference>
<dbReference type="GO" id="GO:0006121">
    <property type="term" value="P:mitochondrial electron transport, succinate to ubiquinone"/>
    <property type="evidence" value="ECO:0000250"/>
    <property type="project" value="UniProtKB"/>
</dbReference>
<dbReference type="GO" id="GO:0034553">
    <property type="term" value="P:mitochondrial respiratory chain complex II assembly"/>
    <property type="evidence" value="ECO:0007669"/>
    <property type="project" value="TreeGrafter"/>
</dbReference>
<dbReference type="GO" id="GO:0018293">
    <property type="term" value="P:protein-FAD linkage"/>
    <property type="evidence" value="ECO:0000250"/>
    <property type="project" value="UniProtKB"/>
</dbReference>
<dbReference type="GO" id="GO:0006099">
    <property type="term" value="P:tricarboxylic acid cycle"/>
    <property type="evidence" value="ECO:0007669"/>
    <property type="project" value="TreeGrafter"/>
</dbReference>
<dbReference type="FunFam" id="1.10.150.250:FF:000002">
    <property type="entry name" value="Succinate dehydrogenase assembly factor 2, mitochondrial"/>
    <property type="match status" value="1"/>
</dbReference>
<dbReference type="Gene3D" id="1.10.150.250">
    <property type="entry name" value="Flavinator of succinate dehydrogenase"/>
    <property type="match status" value="1"/>
</dbReference>
<dbReference type="HAMAP" id="MF_03057">
    <property type="entry name" value="SDHAF2"/>
    <property type="match status" value="1"/>
</dbReference>
<dbReference type="InterPro" id="IPR005631">
    <property type="entry name" value="SDH"/>
</dbReference>
<dbReference type="InterPro" id="IPR036714">
    <property type="entry name" value="SDH_sf"/>
</dbReference>
<dbReference type="InterPro" id="IPR028882">
    <property type="entry name" value="SDHAF2"/>
</dbReference>
<dbReference type="PANTHER" id="PTHR12469">
    <property type="entry name" value="PROTEIN EMI5 HOMOLOG, MITOCHONDRIAL"/>
    <property type="match status" value="1"/>
</dbReference>
<dbReference type="PANTHER" id="PTHR12469:SF2">
    <property type="entry name" value="SUCCINATE DEHYDROGENASE ASSEMBLY FACTOR 2, MITOCHONDRIAL"/>
    <property type="match status" value="1"/>
</dbReference>
<dbReference type="Pfam" id="PF03937">
    <property type="entry name" value="Sdh5"/>
    <property type="match status" value="1"/>
</dbReference>
<dbReference type="SUPFAM" id="SSF109910">
    <property type="entry name" value="YgfY-like"/>
    <property type="match status" value="1"/>
</dbReference>
<name>SDF2B_DROPE</name>
<comment type="function">
    <text evidence="2">Plays an essential role in the assembly of succinate dehydrogenase (SDH), an enzyme complex (also referred to as respiratory complex II) that is a component of both the tricarboxylic acid (TCA) cycle and the mitochondrial electron transport chain, and which couples the oxidation of succinate to fumarate with the reduction of ubiquinone (coenzyme Q) to ubiquinol. Required for flavinylation (covalent attachment of FAD) of the flavoprotein subunit of the SDH catalytic dimer.</text>
</comment>
<comment type="subunit">
    <text evidence="2">Interacts with the flavoprotein subunit within the SDH catalytic dimer.</text>
</comment>
<comment type="subcellular location">
    <subcellularLocation>
        <location evidence="2">Mitochondrion matrix</location>
    </subcellularLocation>
</comment>
<comment type="similarity">
    <text evidence="2">Belongs to the SDHAF2 family.</text>
</comment>
<organism>
    <name type="scientific">Drosophila persimilis</name>
    <name type="common">Fruit fly</name>
    <dbReference type="NCBI Taxonomy" id="7234"/>
    <lineage>
        <taxon>Eukaryota</taxon>
        <taxon>Metazoa</taxon>
        <taxon>Ecdysozoa</taxon>
        <taxon>Arthropoda</taxon>
        <taxon>Hexapoda</taxon>
        <taxon>Insecta</taxon>
        <taxon>Pterygota</taxon>
        <taxon>Neoptera</taxon>
        <taxon>Endopterygota</taxon>
        <taxon>Diptera</taxon>
        <taxon>Brachycera</taxon>
        <taxon>Muscomorpha</taxon>
        <taxon>Ephydroidea</taxon>
        <taxon>Drosophilidae</taxon>
        <taxon>Drosophila</taxon>
        <taxon>Sophophora</taxon>
    </lineage>
</organism>
<sequence length="157" mass="18502">MLRQFLFSTASRRLVRPMIAPHRSASSSLDKTEFTTPSQIVDYDDPPHLPVPEYPLRPDEPLETRKQRLLYQSRKRGMLENDLLLSTFVAKHLRDFSAAQTAQYDDLINGVSNDWDIFYWATETKPTPPQYDTEIMRMLKQHVKNEERVQRIRQPDL</sequence>
<accession>B4GG58</accession>
<feature type="transit peptide" description="Mitochondrion" evidence="1">
    <location>
        <begin position="1"/>
        <end position="24"/>
    </location>
</feature>
<feature type="chain" id="PRO_0000383172" description="Succinate dehydrogenase assembly factor 2-B, mitochondrial">
    <location>
        <begin position="25"/>
        <end position="157"/>
    </location>
</feature>
<reference key="1">
    <citation type="journal article" date="2007" name="Nature">
        <title>Evolution of genes and genomes on the Drosophila phylogeny.</title>
        <authorList>
            <consortium name="Drosophila 12 genomes consortium"/>
        </authorList>
    </citation>
    <scope>NUCLEOTIDE SEQUENCE [LARGE SCALE GENOMIC DNA]</scope>
    <source>
        <strain>MSH-3 / Tucson 14011-0111.49</strain>
    </source>
</reference>
<gene>
    <name type="ORF">GL17204</name>
</gene>